<organism>
    <name type="scientific">Pelagibacter ubique (strain HTCC1062)</name>
    <dbReference type="NCBI Taxonomy" id="335992"/>
    <lineage>
        <taxon>Bacteria</taxon>
        <taxon>Pseudomonadati</taxon>
        <taxon>Pseudomonadota</taxon>
        <taxon>Alphaproteobacteria</taxon>
        <taxon>Candidatus Pelagibacterales</taxon>
        <taxon>Candidatus Pelagibacteraceae</taxon>
        <taxon>Candidatus Pelagibacter</taxon>
    </lineage>
</organism>
<accession>Q4FLM1</accession>
<dbReference type="EMBL" id="CP000084">
    <property type="protein sequence ID" value="AAZ21917.1"/>
    <property type="molecule type" value="Genomic_DNA"/>
</dbReference>
<dbReference type="RefSeq" id="WP_006996814.1">
    <property type="nucleotide sequence ID" value="NC_007205.1"/>
</dbReference>
<dbReference type="SMR" id="Q4FLM1"/>
<dbReference type="STRING" id="335992.SAR11_1114"/>
<dbReference type="GeneID" id="66295603"/>
<dbReference type="KEGG" id="pub:SAR11_1114"/>
<dbReference type="eggNOG" id="COG0090">
    <property type="taxonomic scope" value="Bacteria"/>
</dbReference>
<dbReference type="HOGENOM" id="CLU_036235_2_1_5"/>
<dbReference type="OrthoDB" id="9778722at2"/>
<dbReference type="Proteomes" id="UP000002528">
    <property type="component" value="Chromosome"/>
</dbReference>
<dbReference type="GO" id="GO:0015934">
    <property type="term" value="C:large ribosomal subunit"/>
    <property type="evidence" value="ECO:0007669"/>
    <property type="project" value="InterPro"/>
</dbReference>
<dbReference type="GO" id="GO:0019843">
    <property type="term" value="F:rRNA binding"/>
    <property type="evidence" value="ECO:0007669"/>
    <property type="project" value="UniProtKB-UniRule"/>
</dbReference>
<dbReference type="GO" id="GO:0003735">
    <property type="term" value="F:structural constituent of ribosome"/>
    <property type="evidence" value="ECO:0007669"/>
    <property type="project" value="InterPro"/>
</dbReference>
<dbReference type="GO" id="GO:0016740">
    <property type="term" value="F:transferase activity"/>
    <property type="evidence" value="ECO:0007669"/>
    <property type="project" value="InterPro"/>
</dbReference>
<dbReference type="GO" id="GO:0002181">
    <property type="term" value="P:cytoplasmic translation"/>
    <property type="evidence" value="ECO:0007669"/>
    <property type="project" value="TreeGrafter"/>
</dbReference>
<dbReference type="FunFam" id="2.30.30.30:FF:000001">
    <property type="entry name" value="50S ribosomal protein L2"/>
    <property type="match status" value="1"/>
</dbReference>
<dbReference type="FunFam" id="4.10.950.10:FF:000001">
    <property type="entry name" value="50S ribosomal protein L2"/>
    <property type="match status" value="1"/>
</dbReference>
<dbReference type="Gene3D" id="2.30.30.30">
    <property type="match status" value="1"/>
</dbReference>
<dbReference type="Gene3D" id="2.40.50.140">
    <property type="entry name" value="Nucleic acid-binding proteins"/>
    <property type="match status" value="1"/>
</dbReference>
<dbReference type="Gene3D" id="4.10.950.10">
    <property type="entry name" value="Ribosomal protein L2, domain 3"/>
    <property type="match status" value="1"/>
</dbReference>
<dbReference type="HAMAP" id="MF_01320_B">
    <property type="entry name" value="Ribosomal_uL2_B"/>
    <property type="match status" value="1"/>
</dbReference>
<dbReference type="InterPro" id="IPR012340">
    <property type="entry name" value="NA-bd_OB-fold"/>
</dbReference>
<dbReference type="InterPro" id="IPR014722">
    <property type="entry name" value="Rib_uL2_dom2"/>
</dbReference>
<dbReference type="InterPro" id="IPR002171">
    <property type="entry name" value="Ribosomal_uL2"/>
</dbReference>
<dbReference type="InterPro" id="IPR005880">
    <property type="entry name" value="Ribosomal_uL2_bac/org-type"/>
</dbReference>
<dbReference type="InterPro" id="IPR022669">
    <property type="entry name" value="Ribosomal_uL2_C"/>
</dbReference>
<dbReference type="InterPro" id="IPR022671">
    <property type="entry name" value="Ribosomal_uL2_CS"/>
</dbReference>
<dbReference type="InterPro" id="IPR014726">
    <property type="entry name" value="Ribosomal_uL2_dom3"/>
</dbReference>
<dbReference type="InterPro" id="IPR022666">
    <property type="entry name" value="Ribosomal_uL2_RNA-bd_dom"/>
</dbReference>
<dbReference type="InterPro" id="IPR008991">
    <property type="entry name" value="Translation_prot_SH3-like_sf"/>
</dbReference>
<dbReference type="NCBIfam" id="TIGR01171">
    <property type="entry name" value="rplB_bact"/>
    <property type="match status" value="1"/>
</dbReference>
<dbReference type="PANTHER" id="PTHR13691:SF5">
    <property type="entry name" value="LARGE RIBOSOMAL SUBUNIT PROTEIN UL2M"/>
    <property type="match status" value="1"/>
</dbReference>
<dbReference type="PANTHER" id="PTHR13691">
    <property type="entry name" value="RIBOSOMAL PROTEIN L2"/>
    <property type="match status" value="1"/>
</dbReference>
<dbReference type="Pfam" id="PF00181">
    <property type="entry name" value="Ribosomal_L2"/>
    <property type="match status" value="1"/>
</dbReference>
<dbReference type="Pfam" id="PF03947">
    <property type="entry name" value="Ribosomal_L2_C"/>
    <property type="match status" value="1"/>
</dbReference>
<dbReference type="PIRSF" id="PIRSF002158">
    <property type="entry name" value="Ribosomal_L2"/>
    <property type="match status" value="1"/>
</dbReference>
<dbReference type="SMART" id="SM01383">
    <property type="entry name" value="Ribosomal_L2"/>
    <property type="match status" value="1"/>
</dbReference>
<dbReference type="SMART" id="SM01382">
    <property type="entry name" value="Ribosomal_L2_C"/>
    <property type="match status" value="1"/>
</dbReference>
<dbReference type="SUPFAM" id="SSF50249">
    <property type="entry name" value="Nucleic acid-binding proteins"/>
    <property type="match status" value="1"/>
</dbReference>
<dbReference type="SUPFAM" id="SSF50104">
    <property type="entry name" value="Translation proteins SH3-like domain"/>
    <property type="match status" value="1"/>
</dbReference>
<dbReference type="PROSITE" id="PS00467">
    <property type="entry name" value="RIBOSOMAL_L2"/>
    <property type="match status" value="1"/>
</dbReference>
<proteinExistence type="inferred from homology"/>
<evidence type="ECO:0000255" key="1">
    <source>
        <dbReference type="HAMAP-Rule" id="MF_01320"/>
    </source>
</evidence>
<evidence type="ECO:0000256" key="2">
    <source>
        <dbReference type="SAM" id="MobiDB-lite"/>
    </source>
</evidence>
<evidence type="ECO:0000305" key="3"/>
<name>RL2_PELUB</name>
<reference key="1">
    <citation type="journal article" date="2005" name="Science">
        <title>Genome streamlining in a cosmopolitan oceanic bacterium.</title>
        <authorList>
            <person name="Giovannoni S.J."/>
            <person name="Tripp H.J."/>
            <person name="Givan S."/>
            <person name="Podar M."/>
            <person name="Vergin K.L."/>
            <person name="Baptista D."/>
            <person name="Bibbs L."/>
            <person name="Eads J."/>
            <person name="Richardson T.H."/>
            <person name="Noordewier M."/>
            <person name="Rappe M.S."/>
            <person name="Short J.M."/>
            <person name="Carrington J.C."/>
            <person name="Mathur E.J."/>
        </authorList>
    </citation>
    <scope>NUCLEOTIDE SEQUENCE [LARGE SCALE GENOMIC DNA]</scope>
    <source>
        <strain>HTCC1062</strain>
    </source>
</reference>
<feature type="chain" id="PRO_0000309977" description="Large ribosomal subunit protein uL2">
    <location>
        <begin position="1"/>
        <end position="281"/>
    </location>
</feature>
<feature type="region of interest" description="Disordered" evidence="2">
    <location>
        <begin position="215"/>
        <end position="281"/>
    </location>
</feature>
<feature type="compositionally biased region" description="Basic and acidic residues" evidence="2">
    <location>
        <begin position="258"/>
        <end position="269"/>
    </location>
</feature>
<feature type="compositionally biased region" description="Basic residues" evidence="2">
    <location>
        <begin position="270"/>
        <end position="281"/>
    </location>
</feature>
<sequence>MALKTFKPYTKSTRGTILVDRAGLWKGKPFKALVEPKNSMRGRNNNGHITSRNMSGGGHKKMYRLVDFYRKKIDMPGTVERIEYDPNRSCYIMLVKFDDGQHFYYLAPQKIKVGDKVENGSEKEIKVGNCMPLRDIPVGINIHNVELKPGAGGKIARSAGTSVTISGLDGNYSLIKMTSGEVRKIDSRCMATIGVLSNPDQKNIKIGKAGRSRWLGRRPHTRGVVMNPVDHPHGGGEGKTAGGRHPVSPTGQSAKGLKTRDNKSTDKFIVRRRNNRKDSKK</sequence>
<gene>
    <name evidence="1" type="primary">rplB</name>
    <name type="ordered locus">SAR11_1114</name>
</gene>
<keyword id="KW-1185">Reference proteome</keyword>
<keyword id="KW-0687">Ribonucleoprotein</keyword>
<keyword id="KW-0689">Ribosomal protein</keyword>
<keyword id="KW-0694">RNA-binding</keyword>
<keyword id="KW-0699">rRNA-binding</keyword>
<comment type="function">
    <text evidence="1">One of the primary rRNA binding proteins. Required for association of the 30S and 50S subunits to form the 70S ribosome, for tRNA binding and peptide bond formation. It has been suggested to have peptidyltransferase activity; this is somewhat controversial. Makes several contacts with the 16S rRNA in the 70S ribosome.</text>
</comment>
<comment type="subunit">
    <text evidence="1">Part of the 50S ribosomal subunit. Forms a bridge to the 30S subunit in the 70S ribosome.</text>
</comment>
<comment type="similarity">
    <text evidence="1">Belongs to the universal ribosomal protein uL2 family.</text>
</comment>
<protein>
    <recommendedName>
        <fullName evidence="1">Large ribosomal subunit protein uL2</fullName>
    </recommendedName>
    <alternativeName>
        <fullName evidence="3">50S ribosomal protein L2</fullName>
    </alternativeName>
</protein>